<feature type="chain" id="PRO_0000049232" description="Pituitary homeobox 3">
    <location>
        <begin position="1"/>
        <end position="292"/>
    </location>
</feature>
<feature type="DNA-binding region" description="Homeobox" evidence="3">
    <location>
        <begin position="60"/>
        <end position="119"/>
    </location>
</feature>
<feature type="region of interest" description="Disordered" evidence="5">
    <location>
        <begin position="1"/>
        <end position="55"/>
    </location>
</feature>
<feature type="short sequence motif" description="OAR" evidence="4">
    <location>
        <begin position="254"/>
        <end position="267"/>
    </location>
</feature>
<feature type="short sequence motif" description="Nuclear localization signal" evidence="2">
    <location>
        <begin position="260"/>
        <end position="264"/>
    </location>
</feature>
<feature type="compositionally biased region" description="Basic and acidic residues" evidence="5">
    <location>
        <begin position="25"/>
        <end position="40"/>
    </location>
</feature>
<feature type="sequence conflict" description="In Ref. 2; AAG15383." evidence="6" ref="2">
    <original>I</original>
    <variation>T</variation>
    <location>
        <position position="55"/>
    </location>
</feature>
<feature type="sequence conflict" description="In Ref. 2; AAG15383." evidence="6" ref="2">
    <original>Q</original>
    <variation>P</variation>
    <location>
        <position position="170"/>
    </location>
</feature>
<feature type="sequence conflict" description="In Ref. 2; AAG15383." evidence="6" ref="2">
    <original>T</original>
    <variation>P</variation>
    <location>
        <position position="198"/>
    </location>
</feature>
<feature type="sequence conflict" description="In Ref. 2; AAG15383." evidence="6" ref="2">
    <original>T</original>
    <variation>N</variation>
    <location>
        <position position="229"/>
    </location>
</feature>
<accession>Q9I8K3</accession>
<accession>Q9DF51</accession>
<dbReference type="EMBL" id="AF265671">
    <property type="protein sequence ID" value="AAF97592.1"/>
    <property type="molecule type" value="mRNA"/>
</dbReference>
<dbReference type="EMBL" id="AF297713">
    <property type="protein sequence ID" value="AAG15383.1"/>
    <property type="molecule type" value="mRNA"/>
</dbReference>
<dbReference type="RefSeq" id="NP_001079212.1">
    <property type="nucleotide sequence ID" value="NM_001085743.1"/>
</dbReference>
<dbReference type="RefSeq" id="NP_001082023.1">
    <property type="nucleotide sequence ID" value="NM_001088554.1"/>
</dbReference>
<dbReference type="SMR" id="Q9I8K3"/>
<dbReference type="GeneID" id="373824"/>
<dbReference type="GeneID" id="398183"/>
<dbReference type="KEGG" id="xla:373824"/>
<dbReference type="KEGG" id="xla:398183"/>
<dbReference type="CTD" id="373824"/>
<dbReference type="CTD" id="398183"/>
<dbReference type="OrthoDB" id="6159439at2759"/>
<dbReference type="Proteomes" id="UP000186698">
    <property type="component" value="Chromosome 7L"/>
</dbReference>
<dbReference type="Proteomes" id="UP000186698">
    <property type="component" value="Chromosome 7S"/>
</dbReference>
<dbReference type="Bgee" id="373824">
    <property type="expression patterns" value="Expressed in muscle tissue and 3 other cell types or tissues"/>
</dbReference>
<dbReference type="GO" id="GO:0005634">
    <property type="term" value="C:nucleus"/>
    <property type="evidence" value="ECO:0000318"/>
    <property type="project" value="GO_Central"/>
</dbReference>
<dbReference type="GO" id="GO:0000981">
    <property type="term" value="F:DNA-binding transcription factor activity, RNA polymerase II-specific"/>
    <property type="evidence" value="ECO:0000318"/>
    <property type="project" value="GO_Central"/>
</dbReference>
<dbReference type="GO" id="GO:0000978">
    <property type="term" value="F:RNA polymerase II cis-regulatory region sequence-specific DNA binding"/>
    <property type="evidence" value="ECO:0000318"/>
    <property type="project" value="GO_Central"/>
</dbReference>
<dbReference type="GO" id="GO:0009653">
    <property type="term" value="P:anatomical structure morphogenesis"/>
    <property type="evidence" value="ECO:0000318"/>
    <property type="project" value="GO_Central"/>
</dbReference>
<dbReference type="GO" id="GO:0006357">
    <property type="term" value="P:regulation of transcription by RNA polymerase II"/>
    <property type="evidence" value="ECO:0000318"/>
    <property type="project" value="GO_Central"/>
</dbReference>
<dbReference type="CDD" id="cd00086">
    <property type="entry name" value="homeodomain"/>
    <property type="match status" value="1"/>
</dbReference>
<dbReference type="FunFam" id="1.10.10.60:FF:000031">
    <property type="entry name" value="Homeobox protein"/>
    <property type="match status" value="1"/>
</dbReference>
<dbReference type="Gene3D" id="1.10.10.60">
    <property type="entry name" value="Homeodomain-like"/>
    <property type="match status" value="1"/>
</dbReference>
<dbReference type="InterPro" id="IPR001356">
    <property type="entry name" value="HD"/>
</dbReference>
<dbReference type="InterPro" id="IPR017970">
    <property type="entry name" value="Homeobox_CS"/>
</dbReference>
<dbReference type="InterPro" id="IPR016233">
    <property type="entry name" value="Homeobox_Pitx/unc30"/>
</dbReference>
<dbReference type="InterPro" id="IPR009057">
    <property type="entry name" value="Homeodomain-like_sf"/>
</dbReference>
<dbReference type="InterPro" id="IPR003654">
    <property type="entry name" value="OAR_dom"/>
</dbReference>
<dbReference type="PANTHER" id="PTHR45882:SF2">
    <property type="entry name" value="PITUITARY HOMEOBOX 3"/>
    <property type="match status" value="1"/>
</dbReference>
<dbReference type="PANTHER" id="PTHR45882">
    <property type="entry name" value="PITUITARY HOMEOBOX HOMOLOG PTX1"/>
    <property type="match status" value="1"/>
</dbReference>
<dbReference type="Pfam" id="PF00046">
    <property type="entry name" value="Homeodomain"/>
    <property type="match status" value="1"/>
</dbReference>
<dbReference type="Pfam" id="PF03826">
    <property type="entry name" value="OAR"/>
    <property type="match status" value="1"/>
</dbReference>
<dbReference type="PIRSF" id="PIRSF000563">
    <property type="entry name" value="Homeobox_protein_Pitx/Unc30"/>
    <property type="match status" value="1"/>
</dbReference>
<dbReference type="SMART" id="SM00389">
    <property type="entry name" value="HOX"/>
    <property type="match status" value="1"/>
</dbReference>
<dbReference type="SUPFAM" id="SSF46689">
    <property type="entry name" value="Homeodomain-like"/>
    <property type="match status" value="1"/>
</dbReference>
<dbReference type="PROSITE" id="PS00027">
    <property type="entry name" value="HOMEOBOX_1"/>
    <property type="match status" value="1"/>
</dbReference>
<dbReference type="PROSITE" id="PS50071">
    <property type="entry name" value="HOMEOBOX_2"/>
    <property type="match status" value="1"/>
</dbReference>
<dbReference type="PROSITE" id="PS50803">
    <property type="entry name" value="OAR"/>
    <property type="match status" value="1"/>
</dbReference>
<keyword id="KW-0217">Developmental protein</keyword>
<keyword id="KW-0238">DNA-binding</keyword>
<keyword id="KW-0371">Homeobox</keyword>
<keyword id="KW-0539">Nucleus</keyword>
<keyword id="KW-1185">Reference proteome</keyword>
<keyword id="KW-0804">Transcription</keyword>
<keyword id="KW-0805">Transcription regulation</keyword>
<organism>
    <name type="scientific">Xenopus laevis</name>
    <name type="common">African clawed frog</name>
    <dbReference type="NCBI Taxonomy" id="8355"/>
    <lineage>
        <taxon>Eukaryota</taxon>
        <taxon>Metazoa</taxon>
        <taxon>Chordata</taxon>
        <taxon>Craniata</taxon>
        <taxon>Vertebrata</taxon>
        <taxon>Euteleostomi</taxon>
        <taxon>Amphibia</taxon>
        <taxon>Batrachia</taxon>
        <taxon>Anura</taxon>
        <taxon>Pipoidea</taxon>
        <taxon>Pipidae</taxon>
        <taxon>Xenopodinae</taxon>
        <taxon>Xenopus</taxon>
        <taxon>Xenopus</taxon>
    </lineage>
</organism>
<gene>
    <name type="primary">pitx3</name>
</gene>
<evidence type="ECO:0000250" key="1"/>
<evidence type="ECO:0000255" key="2"/>
<evidence type="ECO:0000255" key="3">
    <source>
        <dbReference type="PROSITE-ProRule" id="PRU00108"/>
    </source>
</evidence>
<evidence type="ECO:0000255" key="4">
    <source>
        <dbReference type="PROSITE-ProRule" id="PRU00138"/>
    </source>
</evidence>
<evidence type="ECO:0000256" key="5">
    <source>
        <dbReference type="SAM" id="MobiDB-lite"/>
    </source>
</evidence>
<evidence type="ECO:0000305" key="6"/>
<reference key="1">
    <citation type="submission" date="2000-05" db="EMBL/GenBank/DDBJ databases">
        <title>xPitx3 exhibits dynamic expression during sensory placode development in Xenopus.</title>
        <authorList>
            <person name="Khosrowshahian F."/>
            <person name="Chang W.Y."/>
            <person name="Lum N."/>
            <person name="Fujiki K."/>
            <person name="Crawford M.J."/>
        </authorList>
    </citation>
    <scope>NUCLEOTIDE SEQUENCE [MRNA]</scope>
</reference>
<reference key="2">
    <citation type="submission" date="2000-08" db="EMBL/GenBank/DDBJ databases">
        <title>Xpitx-3: a homeobox gene expressed in the pituitary anlage and lens epithelium.</title>
        <authorList>
            <person name="Thomas H."/>
            <person name="Tomas P."/>
        </authorList>
    </citation>
    <scope>NUCLEOTIDE SEQUENCE [MRNA]</scope>
</reference>
<proteinExistence type="evidence at transcript level"/>
<name>PITX3_XENLA</name>
<protein>
    <recommendedName>
        <fullName>Pituitary homeobox 3</fullName>
    </recommendedName>
    <alternativeName>
        <fullName>Homeobox protein PITX3</fullName>
        <shortName>XPitx-3</shortName>
        <shortName>xPitx3</shortName>
    </alternativeName>
    <alternativeName>
        <fullName>Paired-like homeodomain transcription factor 3</fullName>
    </alternativeName>
</protein>
<comment type="function">
    <text evidence="1">Transcriptional regulator which may play a role in the differentiation and maintenance of meso-diencephalic dopaminergic (mdDA) neurons. May play a role in the normal lens development and differentiation (By similarity).</text>
</comment>
<comment type="subcellular location">
    <subcellularLocation>
        <location>Nucleus</location>
    </subcellularLocation>
</comment>
<comment type="similarity">
    <text evidence="6">Belongs to the paired homeobox family. Bicoid subfamily.</text>
</comment>
<sequence length="292" mass="32585">MDFNLLTDSEARSPALSLSDSGTPQHDHSCKGQEHSDTEKSQQNQTDDSNPEDGILKKKQRRQRTHFTSQQLQELEATFQRNRYPDMSTREEIAVWTNLTEARVRVWFKNRRAKWRKRERNQQAELCKNSFGAQFNGLMQPYDDMYSGYSYNNWATKGLATSPLSAKSFQFFNSMNVSPLSSQPMFSPPNSIASMTMTSSMVPSAVTGVPGSSLNNLGNINNLNSPSLTSAVSASACPYASTASPYMYRDTCNSSLASLRLKAKQHANFTYPAVQTPASNLSPCQYAVDRPV</sequence>